<comment type="function">
    <text evidence="1">Functions by promoting the formation of the first peptide bond.</text>
</comment>
<comment type="subcellular location">
    <subcellularLocation>
        <location evidence="1">Cytoplasm</location>
    </subcellularLocation>
</comment>
<comment type="similarity">
    <text evidence="1">Belongs to the eIF-5A family.</text>
</comment>
<organism>
    <name type="scientific">Natronomonas pharaonis (strain ATCC 35678 / DSM 2160 / CIP 103997 / JCM 8858 / NBRC 14720 / NCIMB 2260 / Gabara)</name>
    <name type="common">Halobacterium pharaonis</name>
    <dbReference type="NCBI Taxonomy" id="348780"/>
    <lineage>
        <taxon>Archaea</taxon>
        <taxon>Methanobacteriati</taxon>
        <taxon>Methanobacteriota</taxon>
        <taxon>Stenosarchaea group</taxon>
        <taxon>Halobacteria</taxon>
        <taxon>Halobacteriales</taxon>
        <taxon>Haloarculaceae</taxon>
        <taxon>Natronomonas</taxon>
    </lineage>
</organism>
<proteinExistence type="inferred from homology"/>
<reference key="1">
    <citation type="journal article" date="2005" name="Genome Res.">
        <title>Living with two extremes: conclusions from the genome sequence of Natronomonas pharaonis.</title>
        <authorList>
            <person name="Falb M."/>
            <person name="Pfeiffer F."/>
            <person name="Palm P."/>
            <person name="Rodewald K."/>
            <person name="Hickmann V."/>
            <person name="Tittor J."/>
            <person name="Oesterhelt D."/>
        </authorList>
    </citation>
    <scope>NUCLEOTIDE SEQUENCE [LARGE SCALE GENOMIC DNA]</scope>
    <source>
        <strain>ATCC 35678 / DSM 2160 / CIP 103997 / JCM 8858 / NBRC 14720 / NCIMB 2260 / Gabara</strain>
    </source>
</reference>
<name>IF5A_NATPD</name>
<feature type="chain" id="PRO_0000259441" description="Translation initiation factor 5A">
    <location>
        <begin position="1"/>
        <end position="124"/>
    </location>
</feature>
<feature type="region of interest" description="Disordered" evidence="2">
    <location>
        <begin position="27"/>
        <end position="53"/>
    </location>
</feature>
<feature type="modified residue" description="Hypusine" evidence="1">
    <location>
        <position position="36"/>
    </location>
</feature>
<sequence>MPKEQKEVRDLQEGNYVMIEDVPSKITSYSTSKPGKHGSAKARVEGTGVFDGQKRNFTQPVDAKVWVPIVNRKQGQVVSVSGDDMQVMDLETYETITMRIPEDLAPESDDEIEYLEFEGQRKVV</sequence>
<gene>
    <name evidence="1" type="primary">eif5a</name>
    <name type="ordered locus">NP_4752A</name>
</gene>
<keyword id="KW-0963">Cytoplasm</keyword>
<keyword id="KW-0385">Hypusine</keyword>
<keyword id="KW-0396">Initiation factor</keyword>
<keyword id="KW-0648">Protein biosynthesis</keyword>
<keyword id="KW-1185">Reference proteome</keyword>
<evidence type="ECO:0000255" key="1">
    <source>
        <dbReference type="HAMAP-Rule" id="MF_00085"/>
    </source>
</evidence>
<evidence type="ECO:0000256" key="2">
    <source>
        <dbReference type="SAM" id="MobiDB-lite"/>
    </source>
</evidence>
<dbReference type="EMBL" id="CR936257">
    <property type="protein sequence ID" value="CAI50467.1"/>
    <property type="molecule type" value="Genomic_DNA"/>
</dbReference>
<dbReference type="RefSeq" id="WP_011324080.1">
    <property type="nucleotide sequence ID" value="NC_007426.1"/>
</dbReference>
<dbReference type="SMR" id="Q3IN38"/>
<dbReference type="STRING" id="348780.NP_4752A"/>
<dbReference type="EnsemblBacteria" id="CAI50467">
    <property type="protein sequence ID" value="CAI50467"/>
    <property type="gene ID" value="NP_4752A"/>
</dbReference>
<dbReference type="GeneID" id="3703270"/>
<dbReference type="KEGG" id="nph:NP_4752A"/>
<dbReference type="eggNOG" id="arCOG04277">
    <property type="taxonomic scope" value="Archaea"/>
</dbReference>
<dbReference type="HOGENOM" id="CLU_102600_3_0_2"/>
<dbReference type="OrthoDB" id="23689at2157"/>
<dbReference type="Proteomes" id="UP000002698">
    <property type="component" value="Chromosome"/>
</dbReference>
<dbReference type="GO" id="GO:0005737">
    <property type="term" value="C:cytoplasm"/>
    <property type="evidence" value="ECO:0007669"/>
    <property type="project" value="UniProtKB-SubCell"/>
</dbReference>
<dbReference type="GO" id="GO:0043022">
    <property type="term" value="F:ribosome binding"/>
    <property type="evidence" value="ECO:0007669"/>
    <property type="project" value="InterPro"/>
</dbReference>
<dbReference type="GO" id="GO:0003723">
    <property type="term" value="F:RNA binding"/>
    <property type="evidence" value="ECO:0007669"/>
    <property type="project" value="InterPro"/>
</dbReference>
<dbReference type="GO" id="GO:0003746">
    <property type="term" value="F:translation elongation factor activity"/>
    <property type="evidence" value="ECO:0007669"/>
    <property type="project" value="InterPro"/>
</dbReference>
<dbReference type="GO" id="GO:0003743">
    <property type="term" value="F:translation initiation factor activity"/>
    <property type="evidence" value="ECO:0007669"/>
    <property type="project" value="UniProtKB-UniRule"/>
</dbReference>
<dbReference type="GO" id="GO:0045901">
    <property type="term" value="P:positive regulation of translational elongation"/>
    <property type="evidence" value="ECO:0007669"/>
    <property type="project" value="InterPro"/>
</dbReference>
<dbReference type="GO" id="GO:0045905">
    <property type="term" value="P:positive regulation of translational termination"/>
    <property type="evidence" value="ECO:0007669"/>
    <property type="project" value="InterPro"/>
</dbReference>
<dbReference type="CDD" id="cd04467">
    <property type="entry name" value="S1_aIF5A"/>
    <property type="match status" value="1"/>
</dbReference>
<dbReference type="FunFam" id="2.30.30.30:FF:000038">
    <property type="entry name" value="Translation initiation factor 5A"/>
    <property type="match status" value="1"/>
</dbReference>
<dbReference type="Gene3D" id="2.30.30.30">
    <property type="match status" value="1"/>
</dbReference>
<dbReference type="Gene3D" id="2.40.50.140">
    <property type="entry name" value="Nucleic acid-binding proteins"/>
    <property type="match status" value="1"/>
</dbReference>
<dbReference type="HAMAP" id="MF_00085">
    <property type="entry name" value="eIF_5A"/>
    <property type="match status" value="1"/>
</dbReference>
<dbReference type="InterPro" id="IPR001884">
    <property type="entry name" value="IF5A-like"/>
</dbReference>
<dbReference type="InterPro" id="IPR048670">
    <property type="entry name" value="IF5A-like_N"/>
</dbReference>
<dbReference type="InterPro" id="IPR012340">
    <property type="entry name" value="NA-bd_OB-fold"/>
</dbReference>
<dbReference type="InterPro" id="IPR014722">
    <property type="entry name" value="Rib_uL2_dom2"/>
</dbReference>
<dbReference type="InterPro" id="IPR019769">
    <property type="entry name" value="Trans_elong_IF5A_hypusine_site"/>
</dbReference>
<dbReference type="InterPro" id="IPR022847">
    <property type="entry name" value="Transl_elong_IF5A_arc"/>
</dbReference>
<dbReference type="InterPro" id="IPR020189">
    <property type="entry name" value="Transl_elong_IF5A_C"/>
</dbReference>
<dbReference type="InterPro" id="IPR008991">
    <property type="entry name" value="Translation_prot_SH3-like_sf"/>
</dbReference>
<dbReference type="NCBIfam" id="TIGR00037">
    <property type="entry name" value="eIF_5A"/>
    <property type="match status" value="1"/>
</dbReference>
<dbReference type="NCBIfam" id="NF003076">
    <property type="entry name" value="PRK03999.1"/>
    <property type="match status" value="1"/>
</dbReference>
<dbReference type="PANTHER" id="PTHR11673">
    <property type="entry name" value="TRANSLATION INITIATION FACTOR 5A FAMILY MEMBER"/>
    <property type="match status" value="1"/>
</dbReference>
<dbReference type="Pfam" id="PF21485">
    <property type="entry name" value="IF5A-like_N"/>
    <property type="match status" value="1"/>
</dbReference>
<dbReference type="PIRSF" id="PIRSF003025">
    <property type="entry name" value="eIF5A"/>
    <property type="match status" value="1"/>
</dbReference>
<dbReference type="SMART" id="SM01376">
    <property type="entry name" value="eIF-5a"/>
    <property type="match status" value="1"/>
</dbReference>
<dbReference type="SUPFAM" id="SSF50249">
    <property type="entry name" value="Nucleic acid-binding proteins"/>
    <property type="match status" value="1"/>
</dbReference>
<dbReference type="SUPFAM" id="SSF50104">
    <property type="entry name" value="Translation proteins SH3-like domain"/>
    <property type="match status" value="1"/>
</dbReference>
<dbReference type="PROSITE" id="PS00302">
    <property type="entry name" value="IF5A_HYPUSINE"/>
    <property type="match status" value="1"/>
</dbReference>
<protein>
    <recommendedName>
        <fullName evidence="1">Translation initiation factor 5A</fullName>
    </recommendedName>
    <alternativeName>
        <fullName evidence="1">Hypusine-containing protein</fullName>
    </alternativeName>
    <alternativeName>
        <fullName evidence="1">eIF-5A</fullName>
    </alternativeName>
</protein>
<accession>Q3IN38</accession>